<proteinExistence type="inferred from homology"/>
<sequence>MSVLDLNALNALPKVERILALAETNAKLEKLSAEERVAWALENLPGEYALSSSFGIQAAVSLHLVNQLRPDIPVILTDTGYLFPETYQFIDELTDKLKLNLKVYRAQESAAWQEARYGKLWEQGVEGIEKYNEINKVEPMNRALKELNTQTWFAGLRREQSGSRATLPVLAIQRGVFKVLPIIDWDNRTVYQYLQKHGLKYHPLWDQGYLSVGDTHTTRKWEPGMAEEETRFFGLKRECGLHEG</sequence>
<gene>
    <name evidence="1" type="primary">cysH</name>
    <name type="ordered locus">KPK_1006</name>
</gene>
<comment type="function">
    <text evidence="1">Catalyzes the formation of sulfite from phosphoadenosine 5'-phosphosulfate (PAPS) using thioredoxin as an electron donor.</text>
</comment>
<comment type="catalytic activity">
    <reaction evidence="1">
        <text>[thioredoxin]-disulfide + sulfite + adenosine 3',5'-bisphosphate + 2 H(+) = [thioredoxin]-dithiol + 3'-phosphoadenylyl sulfate</text>
        <dbReference type="Rhea" id="RHEA:11724"/>
        <dbReference type="Rhea" id="RHEA-COMP:10698"/>
        <dbReference type="Rhea" id="RHEA-COMP:10700"/>
        <dbReference type="ChEBI" id="CHEBI:15378"/>
        <dbReference type="ChEBI" id="CHEBI:17359"/>
        <dbReference type="ChEBI" id="CHEBI:29950"/>
        <dbReference type="ChEBI" id="CHEBI:50058"/>
        <dbReference type="ChEBI" id="CHEBI:58339"/>
        <dbReference type="ChEBI" id="CHEBI:58343"/>
        <dbReference type="EC" id="1.8.4.8"/>
    </reaction>
</comment>
<comment type="pathway">
    <text evidence="1">Sulfur metabolism; hydrogen sulfide biosynthesis; sulfite from sulfate: step 3/3.</text>
</comment>
<comment type="subcellular location">
    <subcellularLocation>
        <location evidence="1">Cytoplasm</location>
    </subcellularLocation>
</comment>
<comment type="similarity">
    <text evidence="1">Belongs to the PAPS reductase family. CysH subfamily.</text>
</comment>
<keyword id="KW-0963">Cytoplasm</keyword>
<keyword id="KW-0560">Oxidoreductase</keyword>
<name>CYSH_KLEP3</name>
<feature type="chain" id="PRO_1000092175" description="Phosphoadenosine 5'-phosphosulfate reductase">
    <location>
        <begin position="1"/>
        <end position="244"/>
    </location>
</feature>
<feature type="active site" description="Nucleophile; cysteine thiosulfonate intermediate" evidence="1">
    <location>
        <position position="239"/>
    </location>
</feature>
<accession>B5XV26</accession>
<protein>
    <recommendedName>
        <fullName evidence="1">Phosphoadenosine 5'-phosphosulfate reductase</fullName>
        <shortName evidence="1">PAPS reductase</shortName>
        <ecNumber evidence="1">1.8.4.8</ecNumber>
    </recommendedName>
    <alternativeName>
        <fullName evidence="1">3'-phosphoadenylylsulfate reductase</fullName>
    </alternativeName>
    <alternativeName>
        <fullName evidence="1">PAPS reductase, thioredoxin dependent</fullName>
    </alternativeName>
    <alternativeName>
        <fullName evidence="1">PAPS sulfotransferase</fullName>
    </alternativeName>
    <alternativeName>
        <fullName evidence="1">PAdoPS reductase</fullName>
    </alternativeName>
</protein>
<reference key="1">
    <citation type="journal article" date="2008" name="PLoS Genet.">
        <title>Complete genome sequence of the N2-fixing broad host range endophyte Klebsiella pneumoniae 342 and virulence predictions verified in mice.</title>
        <authorList>
            <person name="Fouts D.E."/>
            <person name="Tyler H.L."/>
            <person name="DeBoy R.T."/>
            <person name="Daugherty S."/>
            <person name="Ren Q."/>
            <person name="Badger J.H."/>
            <person name="Durkin A.S."/>
            <person name="Huot H."/>
            <person name="Shrivastava S."/>
            <person name="Kothari S."/>
            <person name="Dodson R.J."/>
            <person name="Mohamoud Y."/>
            <person name="Khouri H."/>
            <person name="Roesch L.F.W."/>
            <person name="Krogfelt K.A."/>
            <person name="Struve C."/>
            <person name="Triplett E.W."/>
            <person name="Methe B.A."/>
        </authorList>
    </citation>
    <scope>NUCLEOTIDE SEQUENCE [LARGE SCALE GENOMIC DNA]</scope>
    <source>
        <strain>342</strain>
    </source>
</reference>
<organism>
    <name type="scientific">Klebsiella pneumoniae (strain 342)</name>
    <dbReference type="NCBI Taxonomy" id="507522"/>
    <lineage>
        <taxon>Bacteria</taxon>
        <taxon>Pseudomonadati</taxon>
        <taxon>Pseudomonadota</taxon>
        <taxon>Gammaproteobacteria</taxon>
        <taxon>Enterobacterales</taxon>
        <taxon>Enterobacteriaceae</taxon>
        <taxon>Klebsiella/Raoultella group</taxon>
        <taxon>Klebsiella</taxon>
        <taxon>Klebsiella pneumoniae complex</taxon>
    </lineage>
</organism>
<evidence type="ECO:0000255" key="1">
    <source>
        <dbReference type="HAMAP-Rule" id="MF_00063"/>
    </source>
</evidence>
<dbReference type="EC" id="1.8.4.8" evidence="1"/>
<dbReference type="EMBL" id="CP000964">
    <property type="protein sequence ID" value="ACI06726.1"/>
    <property type="molecule type" value="Genomic_DNA"/>
</dbReference>
<dbReference type="SMR" id="B5XV26"/>
<dbReference type="KEGG" id="kpe:KPK_1006"/>
<dbReference type="HOGENOM" id="CLU_044089_3_0_6"/>
<dbReference type="UniPathway" id="UPA00140">
    <property type="reaction ID" value="UER00206"/>
</dbReference>
<dbReference type="Proteomes" id="UP000001734">
    <property type="component" value="Chromosome"/>
</dbReference>
<dbReference type="GO" id="GO:0005737">
    <property type="term" value="C:cytoplasm"/>
    <property type="evidence" value="ECO:0007669"/>
    <property type="project" value="UniProtKB-SubCell"/>
</dbReference>
<dbReference type="GO" id="GO:0004604">
    <property type="term" value="F:phosphoadenylyl-sulfate reductase (thioredoxin) activity"/>
    <property type="evidence" value="ECO:0007669"/>
    <property type="project" value="UniProtKB-UniRule"/>
</dbReference>
<dbReference type="GO" id="GO:0070814">
    <property type="term" value="P:hydrogen sulfide biosynthetic process"/>
    <property type="evidence" value="ECO:0007669"/>
    <property type="project" value="UniProtKB-UniRule"/>
</dbReference>
<dbReference type="GO" id="GO:0019379">
    <property type="term" value="P:sulfate assimilation, phosphoadenylyl sulfate reduction by phosphoadenylyl-sulfate reductase (thioredoxin)"/>
    <property type="evidence" value="ECO:0007669"/>
    <property type="project" value="UniProtKB-UniRule"/>
</dbReference>
<dbReference type="CDD" id="cd23945">
    <property type="entry name" value="PAPS_reductase"/>
    <property type="match status" value="1"/>
</dbReference>
<dbReference type="FunFam" id="3.40.50.620:FF:000043">
    <property type="entry name" value="Phosphoadenosine phosphosulfate reductase"/>
    <property type="match status" value="1"/>
</dbReference>
<dbReference type="Gene3D" id="3.40.50.620">
    <property type="entry name" value="HUPs"/>
    <property type="match status" value="1"/>
</dbReference>
<dbReference type="HAMAP" id="MF_00063">
    <property type="entry name" value="CysH"/>
    <property type="match status" value="1"/>
</dbReference>
<dbReference type="InterPro" id="IPR004511">
    <property type="entry name" value="PAPS/APS_Rdtase"/>
</dbReference>
<dbReference type="InterPro" id="IPR002500">
    <property type="entry name" value="PAPS_reduct_dom"/>
</dbReference>
<dbReference type="InterPro" id="IPR011800">
    <property type="entry name" value="PAPS_reductase_CysH"/>
</dbReference>
<dbReference type="InterPro" id="IPR014729">
    <property type="entry name" value="Rossmann-like_a/b/a_fold"/>
</dbReference>
<dbReference type="NCBIfam" id="TIGR00434">
    <property type="entry name" value="cysH"/>
    <property type="match status" value="1"/>
</dbReference>
<dbReference type="NCBIfam" id="TIGR02057">
    <property type="entry name" value="PAPS_reductase"/>
    <property type="match status" value="1"/>
</dbReference>
<dbReference type="NCBIfam" id="NF002537">
    <property type="entry name" value="PRK02090.1"/>
    <property type="match status" value="1"/>
</dbReference>
<dbReference type="PANTHER" id="PTHR46509">
    <property type="entry name" value="PHOSPHOADENOSINE PHOSPHOSULFATE REDUCTASE"/>
    <property type="match status" value="1"/>
</dbReference>
<dbReference type="PANTHER" id="PTHR46509:SF1">
    <property type="entry name" value="PHOSPHOADENOSINE PHOSPHOSULFATE REDUCTASE"/>
    <property type="match status" value="1"/>
</dbReference>
<dbReference type="Pfam" id="PF01507">
    <property type="entry name" value="PAPS_reduct"/>
    <property type="match status" value="1"/>
</dbReference>
<dbReference type="PIRSF" id="PIRSF000857">
    <property type="entry name" value="PAPS_reductase"/>
    <property type="match status" value="1"/>
</dbReference>
<dbReference type="SUPFAM" id="SSF52402">
    <property type="entry name" value="Adenine nucleotide alpha hydrolases-like"/>
    <property type="match status" value="1"/>
</dbReference>